<dbReference type="EC" id="2.3.1.234" evidence="1"/>
<dbReference type="EMBL" id="CP000937">
    <property type="protein sequence ID" value="ABZ87271.1"/>
    <property type="molecule type" value="Genomic_DNA"/>
</dbReference>
<dbReference type="SMR" id="B0TX13"/>
<dbReference type="KEGG" id="fph:Fphi_1049"/>
<dbReference type="eggNOG" id="COG0533">
    <property type="taxonomic scope" value="Bacteria"/>
</dbReference>
<dbReference type="HOGENOM" id="CLU_023208_4_3_6"/>
<dbReference type="GO" id="GO:0005737">
    <property type="term" value="C:cytoplasm"/>
    <property type="evidence" value="ECO:0007669"/>
    <property type="project" value="UniProtKB-SubCell"/>
</dbReference>
<dbReference type="GO" id="GO:0005506">
    <property type="term" value="F:iron ion binding"/>
    <property type="evidence" value="ECO:0007669"/>
    <property type="project" value="UniProtKB-UniRule"/>
</dbReference>
<dbReference type="GO" id="GO:0061711">
    <property type="term" value="F:N(6)-L-threonylcarbamoyladenine synthase activity"/>
    <property type="evidence" value="ECO:0007669"/>
    <property type="project" value="UniProtKB-EC"/>
</dbReference>
<dbReference type="GO" id="GO:0002949">
    <property type="term" value="P:tRNA threonylcarbamoyladenosine modification"/>
    <property type="evidence" value="ECO:0007669"/>
    <property type="project" value="UniProtKB-UniRule"/>
</dbReference>
<dbReference type="CDD" id="cd24133">
    <property type="entry name" value="ASKHA_NBD_TsaD_bac"/>
    <property type="match status" value="1"/>
</dbReference>
<dbReference type="FunFam" id="3.30.420.40:FF:000012">
    <property type="entry name" value="tRNA N6-adenosine threonylcarbamoyltransferase"/>
    <property type="match status" value="1"/>
</dbReference>
<dbReference type="FunFam" id="3.30.420.40:FF:000040">
    <property type="entry name" value="tRNA N6-adenosine threonylcarbamoyltransferase"/>
    <property type="match status" value="1"/>
</dbReference>
<dbReference type="Gene3D" id="3.30.420.40">
    <property type="match status" value="2"/>
</dbReference>
<dbReference type="HAMAP" id="MF_01445">
    <property type="entry name" value="TsaD"/>
    <property type="match status" value="1"/>
</dbReference>
<dbReference type="InterPro" id="IPR043129">
    <property type="entry name" value="ATPase_NBD"/>
</dbReference>
<dbReference type="InterPro" id="IPR000905">
    <property type="entry name" value="Gcp-like_dom"/>
</dbReference>
<dbReference type="InterPro" id="IPR017861">
    <property type="entry name" value="KAE1/TsaD"/>
</dbReference>
<dbReference type="InterPro" id="IPR022450">
    <property type="entry name" value="TsaD"/>
</dbReference>
<dbReference type="NCBIfam" id="TIGR00329">
    <property type="entry name" value="gcp_kae1"/>
    <property type="match status" value="1"/>
</dbReference>
<dbReference type="NCBIfam" id="TIGR03723">
    <property type="entry name" value="T6A_TsaD_YgjD"/>
    <property type="match status" value="1"/>
</dbReference>
<dbReference type="PANTHER" id="PTHR11735">
    <property type="entry name" value="TRNA N6-ADENOSINE THREONYLCARBAMOYLTRANSFERASE"/>
    <property type="match status" value="1"/>
</dbReference>
<dbReference type="PANTHER" id="PTHR11735:SF6">
    <property type="entry name" value="TRNA N6-ADENOSINE THREONYLCARBAMOYLTRANSFERASE, MITOCHONDRIAL"/>
    <property type="match status" value="1"/>
</dbReference>
<dbReference type="Pfam" id="PF00814">
    <property type="entry name" value="TsaD"/>
    <property type="match status" value="1"/>
</dbReference>
<dbReference type="PRINTS" id="PR00789">
    <property type="entry name" value="OSIALOPTASE"/>
</dbReference>
<dbReference type="SUPFAM" id="SSF53067">
    <property type="entry name" value="Actin-like ATPase domain"/>
    <property type="match status" value="2"/>
</dbReference>
<comment type="function">
    <text evidence="1">Required for the formation of a threonylcarbamoyl group on adenosine at position 37 (t(6)A37) in tRNAs that read codons beginning with adenine. Is involved in the transfer of the threonylcarbamoyl moiety of threonylcarbamoyl-AMP (TC-AMP) to the N6 group of A37, together with TsaE and TsaB. TsaD likely plays a direct catalytic role in this reaction.</text>
</comment>
<comment type="catalytic activity">
    <reaction evidence="1">
        <text>L-threonylcarbamoyladenylate + adenosine(37) in tRNA = N(6)-L-threonylcarbamoyladenosine(37) in tRNA + AMP + H(+)</text>
        <dbReference type="Rhea" id="RHEA:37059"/>
        <dbReference type="Rhea" id="RHEA-COMP:10162"/>
        <dbReference type="Rhea" id="RHEA-COMP:10163"/>
        <dbReference type="ChEBI" id="CHEBI:15378"/>
        <dbReference type="ChEBI" id="CHEBI:73682"/>
        <dbReference type="ChEBI" id="CHEBI:74411"/>
        <dbReference type="ChEBI" id="CHEBI:74418"/>
        <dbReference type="ChEBI" id="CHEBI:456215"/>
        <dbReference type="EC" id="2.3.1.234"/>
    </reaction>
</comment>
<comment type="cofactor">
    <cofactor evidence="1">
        <name>Fe(2+)</name>
        <dbReference type="ChEBI" id="CHEBI:29033"/>
    </cofactor>
    <text evidence="1">Binds 1 Fe(2+) ion per subunit.</text>
</comment>
<comment type="subcellular location">
    <subcellularLocation>
        <location evidence="1">Cytoplasm</location>
    </subcellularLocation>
</comment>
<comment type="similarity">
    <text evidence="1">Belongs to the KAE1 / TsaD family.</text>
</comment>
<keyword id="KW-0012">Acyltransferase</keyword>
<keyword id="KW-0963">Cytoplasm</keyword>
<keyword id="KW-0408">Iron</keyword>
<keyword id="KW-0479">Metal-binding</keyword>
<keyword id="KW-0808">Transferase</keyword>
<keyword id="KW-0819">tRNA processing</keyword>
<proteinExistence type="inferred from homology"/>
<evidence type="ECO:0000255" key="1">
    <source>
        <dbReference type="HAMAP-Rule" id="MF_01445"/>
    </source>
</evidence>
<organism>
    <name type="scientific">Francisella philomiragia subsp. philomiragia (strain ATCC 25017 / CCUG 19701 / FSC 153 / O#319-036)</name>
    <dbReference type="NCBI Taxonomy" id="484022"/>
    <lineage>
        <taxon>Bacteria</taxon>
        <taxon>Pseudomonadati</taxon>
        <taxon>Pseudomonadota</taxon>
        <taxon>Gammaproteobacteria</taxon>
        <taxon>Thiotrichales</taxon>
        <taxon>Francisellaceae</taxon>
        <taxon>Francisella</taxon>
    </lineage>
</organism>
<gene>
    <name evidence="1" type="primary">tsaD</name>
    <name type="synonym">gcp</name>
    <name type="ordered locus">Fphi_1049</name>
</gene>
<accession>B0TX13</accession>
<feature type="chain" id="PRO_1000087475" description="tRNA N6-adenosine threonylcarbamoyltransferase">
    <location>
        <begin position="1"/>
        <end position="336"/>
    </location>
</feature>
<feature type="binding site" evidence="1">
    <location>
        <position position="112"/>
    </location>
    <ligand>
        <name>Fe cation</name>
        <dbReference type="ChEBI" id="CHEBI:24875"/>
    </ligand>
</feature>
<feature type="binding site" evidence="1">
    <location>
        <position position="116"/>
    </location>
    <ligand>
        <name>Fe cation</name>
        <dbReference type="ChEBI" id="CHEBI:24875"/>
    </ligand>
</feature>
<feature type="binding site" evidence="1">
    <location>
        <begin position="136"/>
        <end position="140"/>
    </location>
    <ligand>
        <name>substrate</name>
    </ligand>
</feature>
<feature type="binding site" evidence="1">
    <location>
        <position position="169"/>
    </location>
    <ligand>
        <name>substrate</name>
    </ligand>
</feature>
<feature type="binding site" evidence="1">
    <location>
        <position position="182"/>
    </location>
    <ligand>
        <name>substrate</name>
    </ligand>
</feature>
<feature type="binding site" evidence="1">
    <location>
        <position position="276"/>
    </location>
    <ligand>
        <name>substrate</name>
    </ligand>
</feature>
<feature type="binding site" evidence="1">
    <location>
        <position position="304"/>
    </location>
    <ligand>
        <name>Fe cation</name>
        <dbReference type="ChEBI" id="CHEBI:24875"/>
    </ligand>
</feature>
<protein>
    <recommendedName>
        <fullName evidence="1">tRNA N6-adenosine threonylcarbamoyltransferase</fullName>
        <ecNumber evidence="1">2.3.1.234</ecNumber>
    </recommendedName>
    <alternativeName>
        <fullName evidence="1">N6-L-threonylcarbamoyladenine synthase</fullName>
        <shortName evidence="1">t(6)A synthase</shortName>
    </alternativeName>
    <alternativeName>
        <fullName evidence="1">t(6)A37 threonylcarbamoyladenosine biosynthesis protein TsaD</fullName>
    </alternativeName>
    <alternativeName>
        <fullName evidence="1">tRNA threonylcarbamoyladenosine biosynthesis protein TsaD</fullName>
    </alternativeName>
</protein>
<sequence>MLVLGIESSCDETGLAIYDYTSKTLVADVLYSQIDLHKKYGGVVPELASREHIAKLNILTKELLSNANINFNDLSCIAYTAMPGLIGALMVGATFAKTLGLIHNIDTVAVHHLEGHLLSPLLDQSSDIKYPFVALLVSGGHTQLFEVREFGEYSLLGESIDDAAGEAFDKTAKLLGMSYPGGVEVANLAEKATDKKKYDLPRPMKNKPNLDFSFSGLKTAVLNTWYSETDQSYENKANLCYAFQEAAIDVLVTKCEKALQKTGNKRLVISGGVSANKLLRSKLDILSKNKGYEIFFPPMKYCTDNGAMIALAGAYRYANSFRDSNLEINVKARAQI</sequence>
<name>TSAD_FRAP2</name>
<reference key="1">
    <citation type="submission" date="2007-12" db="EMBL/GenBank/DDBJ databases">
        <title>Complete sequence of chromosome of Francisella philomiragia subsp. philomiragia ATCC 25017.</title>
        <authorList>
            <consortium name="US DOE Joint Genome Institute"/>
            <person name="Copeland A."/>
            <person name="Lucas S."/>
            <person name="Lapidus A."/>
            <person name="Barry K."/>
            <person name="Detter J.C."/>
            <person name="Glavina del Rio T."/>
            <person name="Hammon N."/>
            <person name="Israni S."/>
            <person name="Dalin E."/>
            <person name="Tice H."/>
            <person name="Pitluck S."/>
            <person name="Chain P."/>
            <person name="Malfatti S."/>
            <person name="Shin M."/>
            <person name="Vergez L."/>
            <person name="Schmutz J."/>
            <person name="Larimer F."/>
            <person name="Land M."/>
            <person name="Hauser L."/>
            <person name="Richardson P."/>
        </authorList>
    </citation>
    <scope>NUCLEOTIDE SEQUENCE [LARGE SCALE GENOMIC DNA]</scope>
    <source>
        <strain>ATCC 25017 / CCUG 19701 / FSC 153 / O#319-036</strain>
    </source>
</reference>